<feature type="chain" id="PRO_1000024831" description="Ribonuclease PH">
    <location>
        <begin position="1"/>
        <end position="260"/>
    </location>
</feature>
<feature type="binding site" evidence="1">
    <location>
        <position position="88"/>
    </location>
    <ligand>
        <name>phosphate</name>
        <dbReference type="ChEBI" id="CHEBI:43474"/>
        <note>substrate</note>
    </ligand>
</feature>
<feature type="binding site" evidence="1">
    <location>
        <begin position="126"/>
        <end position="128"/>
    </location>
    <ligand>
        <name>phosphate</name>
        <dbReference type="ChEBI" id="CHEBI:43474"/>
        <note>substrate</note>
    </ligand>
</feature>
<accession>A3Q379</accession>
<reference key="1">
    <citation type="submission" date="2007-02" db="EMBL/GenBank/DDBJ databases">
        <title>Complete sequence of Mycobacterium sp. JLS.</title>
        <authorList>
            <consortium name="US DOE Joint Genome Institute"/>
            <person name="Copeland A."/>
            <person name="Lucas S."/>
            <person name="Lapidus A."/>
            <person name="Barry K."/>
            <person name="Detter J.C."/>
            <person name="Glavina del Rio T."/>
            <person name="Hammon N."/>
            <person name="Israni S."/>
            <person name="Dalin E."/>
            <person name="Tice H."/>
            <person name="Pitluck S."/>
            <person name="Chain P."/>
            <person name="Malfatti S."/>
            <person name="Shin M."/>
            <person name="Vergez L."/>
            <person name="Schmutz J."/>
            <person name="Larimer F."/>
            <person name="Land M."/>
            <person name="Hauser L."/>
            <person name="Kyrpides N."/>
            <person name="Mikhailova N."/>
            <person name="Miller C.D."/>
            <person name="Anderson A.J."/>
            <person name="Sims R.C."/>
            <person name="Richardson P."/>
        </authorList>
    </citation>
    <scope>NUCLEOTIDE SEQUENCE [LARGE SCALE GENOMIC DNA]</scope>
    <source>
        <strain>JLS</strain>
    </source>
</reference>
<dbReference type="EC" id="2.7.7.56" evidence="1"/>
<dbReference type="EMBL" id="CP000580">
    <property type="protein sequence ID" value="ABN99606.1"/>
    <property type="molecule type" value="Genomic_DNA"/>
</dbReference>
<dbReference type="SMR" id="A3Q379"/>
<dbReference type="KEGG" id="mjl:Mjls_3830"/>
<dbReference type="HOGENOM" id="CLU_050858_0_0_11"/>
<dbReference type="BioCyc" id="MSP164757:G1G8C-3867-MONOMER"/>
<dbReference type="GO" id="GO:0000175">
    <property type="term" value="F:3'-5'-RNA exonuclease activity"/>
    <property type="evidence" value="ECO:0007669"/>
    <property type="project" value="UniProtKB-UniRule"/>
</dbReference>
<dbReference type="GO" id="GO:0000049">
    <property type="term" value="F:tRNA binding"/>
    <property type="evidence" value="ECO:0007669"/>
    <property type="project" value="UniProtKB-UniRule"/>
</dbReference>
<dbReference type="GO" id="GO:0009022">
    <property type="term" value="F:tRNA nucleotidyltransferase activity"/>
    <property type="evidence" value="ECO:0007669"/>
    <property type="project" value="UniProtKB-UniRule"/>
</dbReference>
<dbReference type="GO" id="GO:0016075">
    <property type="term" value="P:rRNA catabolic process"/>
    <property type="evidence" value="ECO:0007669"/>
    <property type="project" value="UniProtKB-UniRule"/>
</dbReference>
<dbReference type="GO" id="GO:0006364">
    <property type="term" value="P:rRNA processing"/>
    <property type="evidence" value="ECO:0007669"/>
    <property type="project" value="UniProtKB-KW"/>
</dbReference>
<dbReference type="GO" id="GO:0008033">
    <property type="term" value="P:tRNA processing"/>
    <property type="evidence" value="ECO:0007669"/>
    <property type="project" value="UniProtKB-UniRule"/>
</dbReference>
<dbReference type="FunFam" id="3.30.230.70:FF:000003">
    <property type="entry name" value="Ribonuclease PH"/>
    <property type="match status" value="1"/>
</dbReference>
<dbReference type="Gene3D" id="3.30.230.70">
    <property type="entry name" value="GHMP Kinase, N-terminal domain"/>
    <property type="match status" value="1"/>
</dbReference>
<dbReference type="HAMAP" id="MF_00564">
    <property type="entry name" value="RNase_PH"/>
    <property type="match status" value="1"/>
</dbReference>
<dbReference type="InterPro" id="IPR001247">
    <property type="entry name" value="ExoRNase_PH_dom1"/>
</dbReference>
<dbReference type="InterPro" id="IPR015847">
    <property type="entry name" value="ExoRNase_PH_dom2"/>
</dbReference>
<dbReference type="InterPro" id="IPR036345">
    <property type="entry name" value="ExoRNase_PH_dom2_sf"/>
</dbReference>
<dbReference type="InterPro" id="IPR027408">
    <property type="entry name" value="PNPase/RNase_PH_dom_sf"/>
</dbReference>
<dbReference type="InterPro" id="IPR020568">
    <property type="entry name" value="Ribosomal_Su5_D2-typ_SF"/>
</dbReference>
<dbReference type="InterPro" id="IPR050080">
    <property type="entry name" value="RNase_PH"/>
</dbReference>
<dbReference type="InterPro" id="IPR002381">
    <property type="entry name" value="RNase_PH_bac-type"/>
</dbReference>
<dbReference type="InterPro" id="IPR018336">
    <property type="entry name" value="RNase_PH_CS"/>
</dbReference>
<dbReference type="NCBIfam" id="TIGR01966">
    <property type="entry name" value="RNasePH"/>
    <property type="match status" value="1"/>
</dbReference>
<dbReference type="PANTHER" id="PTHR11953">
    <property type="entry name" value="EXOSOME COMPLEX COMPONENT"/>
    <property type="match status" value="1"/>
</dbReference>
<dbReference type="PANTHER" id="PTHR11953:SF0">
    <property type="entry name" value="EXOSOME COMPLEX COMPONENT RRP41"/>
    <property type="match status" value="1"/>
</dbReference>
<dbReference type="Pfam" id="PF01138">
    <property type="entry name" value="RNase_PH"/>
    <property type="match status" value="1"/>
</dbReference>
<dbReference type="Pfam" id="PF03725">
    <property type="entry name" value="RNase_PH_C"/>
    <property type="match status" value="1"/>
</dbReference>
<dbReference type="SUPFAM" id="SSF55666">
    <property type="entry name" value="Ribonuclease PH domain 2-like"/>
    <property type="match status" value="1"/>
</dbReference>
<dbReference type="SUPFAM" id="SSF54211">
    <property type="entry name" value="Ribosomal protein S5 domain 2-like"/>
    <property type="match status" value="1"/>
</dbReference>
<dbReference type="PROSITE" id="PS01277">
    <property type="entry name" value="RIBONUCLEASE_PH"/>
    <property type="match status" value="1"/>
</dbReference>
<comment type="function">
    <text evidence="1">Phosphorolytic 3'-5' exoribonuclease that plays an important role in tRNA 3'-end maturation. Removes nucleotide residues following the 3'-CCA terminus of tRNAs; can also add nucleotides to the ends of RNA molecules by using nucleoside diphosphates as substrates, but this may not be physiologically important. Probably plays a role in initiation of 16S rRNA degradation (leading to ribosome degradation) during starvation.</text>
</comment>
<comment type="catalytic activity">
    <reaction evidence="1">
        <text>tRNA(n+1) + phosphate = tRNA(n) + a ribonucleoside 5'-diphosphate</text>
        <dbReference type="Rhea" id="RHEA:10628"/>
        <dbReference type="Rhea" id="RHEA-COMP:17343"/>
        <dbReference type="Rhea" id="RHEA-COMP:17344"/>
        <dbReference type="ChEBI" id="CHEBI:43474"/>
        <dbReference type="ChEBI" id="CHEBI:57930"/>
        <dbReference type="ChEBI" id="CHEBI:173114"/>
        <dbReference type="EC" id="2.7.7.56"/>
    </reaction>
</comment>
<comment type="subunit">
    <text evidence="1">Homohexameric ring arranged as a trimer of dimers.</text>
</comment>
<comment type="similarity">
    <text evidence="1">Belongs to the RNase PH family.</text>
</comment>
<evidence type="ECO:0000255" key="1">
    <source>
        <dbReference type="HAMAP-Rule" id="MF_00564"/>
    </source>
</evidence>
<keyword id="KW-0548">Nucleotidyltransferase</keyword>
<keyword id="KW-0694">RNA-binding</keyword>
<keyword id="KW-0698">rRNA processing</keyword>
<keyword id="KW-0808">Transferase</keyword>
<keyword id="KW-0819">tRNA processing</keyword>
<keyword id="KW-0820">tRNA-binding</keyword>
<proteinExistence type="inferred from homology"/>
<gene>
    <name evidence="1" type="primary">rph</name>
    <name type="ordered locus">Mjls_3830</name>
</gene>
<name>RNPH_MYCSJ</name>
<sequence>MSRREDGRLDDELRPVRITRGFTSHPAGSVLVEFGETRVMCTASVTEGVPRWRKGTGQGWLTAEYAMLPAATHDRSDRESVKGRVGGRTQEISRLIGRSLRACIDLNALGENTIAIDCDVLQADGGTRTAAITGAYVALADAVTYLAAAEKLSDPRPLSCAIAAVSVGVVDGRVRVDLPYSEDSRAEVDMNVVATDTGTLVEIQGTGEGATFPRSTLDKLLDLALASCDQLFVVQREALDAPYPGALPEPTSPPKKAFGS</sequence>
<protein>
    <recommendedName>
        <fullName evidence="1">Ribonuclease PH</fullName>
        <shortName evidence="1">RNase PH</shortName>
        <ecNumber evidence="1">2.7.7.56</ecNumber>
    </recommendedName>
    <alternativeName>
        <fullName evidence="1">tRNA nucleotidyltransferase</fullName>
    </alternativeName>
</protein>
<organism>
    <name type="scientific">Mycobacterium sp. (strain JLS)</name>
    <dbReference type="NCBI Taxonomy" id="164757"/>
    <lineage>
        <taxon>Bacteria</taxon>
        <taxon>Bacillati</taxon>
        <taxon>Actinomycetota</taxon>
        <taxon>Actinomycetes</taxon>
        <taxon>Mycobacteriales</taxon>
        <taxon>Mycobacteriaceae</taxon>
        <taxon>Mycobacterium</taxon>
    </lineage>
</organism>